<dbReference type="PIR" id="S21204">
    <property type="entry name" value="S21204"/>
</dbReference>
<dbReference type="Proteomes" id="UP001155700">
    <property type="component" value="Unplaced"/>
</dbReference>
<dbReference type="GO" id="GO:0005743">
    <property type="term" value="C:mitochondrial inner membrane"/>
    <property type="evidence" value="ECO:0007669"/>
    <property type="project" value="UniProtKB-SubCell"/>
</dbReference>
<dbReference type="GO" id="GO:0045259">
    <property type="term" value="C:proton-transporting ATP synthase complex"/>
    <property type="evidence" value="ECO:0007669"/>
    <property type="project" value="UniProtKB-KW"/>
</dbReference>
<dbReference type="GO" id="GO:0005524">
    <property type="term" value="F:ATP binding"/>
    <property type="evidence" value="ECO:0007669"/>
    <property type="project" value="UniProtKB-KW"/>
</dbReference>
<dbReference type="GO" id="GO:0006754">
    <property type="term" value="P:ATP biosynthetic process"/>
    <property type="evidence" value="ECO:0007669"/>
    <property type="project" value="UniProtKB-KW"/>
</dbReference>
<dbReference type="GO" id="GO:1902600">
    <property type="term" value="P:proton transmembrane transport"/>
    <property type="evidence" value="ECO:0007669"/>
    <property type="project" value="UniProtKB-KW"/>
</dbReference>
<organism>
    <name type="scientific">Spinacia oleracea</name>
    <name type="common">Spinach</name>
    <dbReference type="NCBI Taxonomy" id="3562"/>
    <lineage>
        <taxon>Eukaryota</taxon>
        <taxon>Viridiplantae</taxon>
        <taxon>Streptophyta</taxon>
        <taxon>Embryophyta</taxon>
        <taxon>Tracheophyta</taxon>
        <taxon>Spermatophyta</taxon>
        <taxon>Magnoliopsida</taxon>
        <taxon>eudicotyledons</taxon>
        <taxon>Gunneridae</taxon>
        <taxon>Pentapetalae</taxon>
        <taxon>Caryophyllales</taxon>
        <taxon>Chenopodiaceae</taxon>
        <taxon>Chenopodioideae</taxon>
        <taxon>Anserineae</taxon>
        <taxon>Spinacia</taxon>
    </lineage>
</organism>
<protein>
    <recommendedName>
        <fullName>ATP synthase subunit alpha, mitochondrial</fullName>
    </recommendedName>
</protein>
<keyword id="KW-0066">ATP synthesis</keyword>
<keyword id="KW-0067">ATP-binding</keyword>
<keyword id="KW-0139">CF(1)</keyword>
<keyword id="KW-0903">Direct protein sequencing</keyword>
<keyword id="KW-0375">Hydrogen ion transport</keyword>
<keyword id="KW-0406">Ion transport</keyword>
<keyword id="KW-0472">Membrane</keyword>
<keyword id="KW-0496">Mitochondrion</keyword>
<keyword id="KW-0999">Mitochondrion inner membrane</keyword>
<keyword id="KW-0547">Nucleotide-binding</keyword>
<keyword id="KW-1185">Reference proteome</keyword>
<keyword id="KW-0813">Transport</keyword>
<sequence length="25" mass="2904">MEFSPRAAELTTLLESRISNFYTNI</sequence>
<gene>
    <name type="primary">ATPA</name>
</gene>
<comment type="function">
    <text evidence="1">Mitochondrial membrane ATP synthase (F(1)F(0) ATP synthase or Complex V) produces ATP from ADP in the presence of a proton gradient across the membrane which is generated by electron transport complexes of the respiratory chain. F-type ATPases consist of two structural domains, F(1) - containing the extramembraneous catalytic core, and F(0) - containing the membrane proton channel, linked together by a central stalk and a peripheral stalk. During catalysis, ATP synthesis in the catalytic domain of F(1) is coupled via a rotary mechanism of the central stalk subunits to proton translocation. Subunits alpha and beta form the catalytic core in F(1). Rotation of the central stalk against the surrounding alpha(3)beta(3) subunits leads to hydrolysis of ATP in three separate catalytic sites on the beta subunits. Subunit alpha does not bear the catalytic high-affinity ATP-binding sites (By similarity).</text>
</comment>
<comment type="subunit">
    <text>F-type ATPases have 2 components, CF(1) - the catalytic core - and CF(0) - the membrane proton channel. CF(1) has five subunits: alpha(3), beta(3), gamma(1), delta(1), epsilon(1). CF(0) has three main subunits: a, b and c.</text>
</comment>
<comment type="subcellular location">
    <subcellularLocation>
        <location>Mitochondrion</location>
    </subcellularLocation>
    <subcellularLocation>
        <location>Mitochondrion inner membrane</location>
    </subcellularLocation>
    <text>Peripheral membrane protein.</text>
</comment>
<comment type="similarity">
    <text evidence="2">Belongs to the ATPase alpha/beta chains family.</text>
</comment>
<reference key="1">
    <citation type="journal article" date="1992" name="Eur. J. Biochem.">
        <title>Plant mitochondrial F0F1 ATP synthase. Identification of the individual subunits and properties of the purified spinach leaf mitochondrial ATP synthase.</title>
        <authorList>
            <person name="Hamasur B."/>
            <person name="Glaser E."/>
        </authorList>
    </citation>
    <scope>PROTEIN SEQUENCE</scope>
    <source>
        <strain>cv. Medania</strain>
        <tissue>Leaf mesophyll</tissue>
    </source>
</reference>
<name>ATPAM_SPIOL</name>
<feature type="chain" id="PRO_0000144409" description="ATP synthase subunit alpha, mitochondrial">
    <location>
        <begin position="1"/>
        <end position="25" status="greater than"/>
    </location>
</feature>
<feature type="non-terminal residue">
    <location>
        <position position="25"/>
    </location>
</feature>
<geneLocation type="mitochondrion"/>
<evidence type="ECO:0000250" key="1"/>
<evidence type="ECO:0000305" key="2"/>
<proteinExistence type="evidence at protein level"/>
<accession>P80082</accession>